<keyword id="KW-0067">ATP-binding</keyword>
<keyword id="KW-0963">Cytoplasm</keyword>
<keyword id="KW-0227">DNA damage</keyword>
<keyword id="KW-0233">DNA recombination</keyword>
<keyword id="KW-0234">DNA repair</keyword>
<keyword id="KW-0238">DNA-binding</keyword>
<keyword id="KW-0547">Nucleotide-binding</keyword>
<keyword id="KW-0742">SOS response</keyword>
<reference key="1">
    <citation type="journal article" date="2006" name="Proc. Natl. Acad. Sci. U.S.A.">
        <title>Molecular genetic anatomy of inter- and intraserotype variation in the human bacterial pathogen group A Streptococcus.</title>
        <authorList>
            <person name="Beres S.B."/>
            <person name="Richter E.W."/>
            <person name="Nagiec M.J."/>
            <person name="Sumby P."/>
            <person name="Porcella S.F."/>
            <person name="DeLeo F.R."/>
            <person name="Musser J.M."/>
        </authorList>
    </citation>
    <scope>NUCLEOTIDE SEQUENCE [LARGE SCALE GENOMIC DNA]</scope>
    <source>
        <strain>MGAS2096</strain>
    </source>
</reference>
<comment type="function">
    <text evidence="1">Can catalyze the hydrolysis of ATP in the presence of single-stranded DNA, the ATP-dependent uptake of single-stranded DNA by duplex DNA, and the ATP-dependent hybridization of homologous single-stranded DNAs. It interacts with LexA causing its activation and leading to its autocatalytic cleavage.</text>
</comment>
<comment type="subcellular location">
    <subcellularLocation>
        <location evidence="1">Cytoplasm</location>
    </subcellularLocation>
</comment>
<comment type="similarity">
    <text evidence="1">Belongs to the RecA family.</text>
</comment>
<name>RECA_STRPB</name>
<dbReference type="EMBL" id="CP000261">
    <property type="protein sequence ID" value="ABF36884.1"/>
    <property type="molecule type" value="Genomic_DNA"/>
</dbReference>
<dbReference type="SMR" id="Q1J9C7"/>
<dbReference type="KEGG" id="spj:MGAS2096_Spy1832"/>
<dbReference type="HOGENOM" id="CLU_040469_3_2_9"/>
<dbReference type="GO" id="GO:0005829">
    <property type="term" value="C:cytosol"/>
    <property type="evidence" value="ECO:0007669"/>
    <property type="project" value="TreeGrafter"/>
</dbReference>
<dbReference type="GO" id="GO:0005524">
    <property type="term" value="F:ATP binding"/>
    <property type="evidence" value="ECO:0007669"/>
    <property type="project" value="UniProtKB-UniRule"/>
</dbReference>
<dbReference type="GO" id="GO:0016887">
    <property type="term" value="F:ATP hydrolysis activity"/>
    <property type="evidence" value="ECO:0007669"/>
    <property type="project" value="InterPro"/>
</dbReference>
<dbReference type="GO" id="GO:0140664">
    <property type="term" value="F:ATP-dependent DNA damage sensor activity"/>
    <property type="evidence" value="ECO:0007669"/>
    <property type="project" value="InterPro"/>
</dbReference>
<dbReference type="GO" id="GO:0003684">
    <property type="term" value="F:damaged DNA binding"/>
    <property type="evidence" value="ECO:0007669"/>
    <property type="project" value="UniProtKB-UniRule"/>
</dbReference>
<dbReference type="GO" id="GO:0003697">
    <property type="term" value="F:single-stranded DNA binding"/>
    <property type="evidence" value="ECO:0007669"/>
    <property type="project" value="UniProtKB-UniRule"/>
</dbReference>
<dbReference type="GO" id="GO:0006310">
    <property type="term" value="P:DNA recombination"/>
    <property type="evidence" value="ECO:0007669"/>
    <property type="project" value="UniProtKB-UniRule"/>
</dbReference>
<dbReference type="GO" id="GO:0006281">
    <property type="term" value="P:DNA repair"/>
    <property type="evidence" value="ECO:0007669"/>
    <property type="project" value="UniProtKB-UniRule"/>
</dbReference>
<dbReference type="GO" id="GO:0009432">
    <property type="term" value="P:SOS response"/>
    <property type="evidence" value="ECO:0007669"/>
    <property type="project" value="UniProtKB-UniRule"/>
</dbReference>
<dbReference type="CDD" id="cd00983">
    <property type="entry name" value="RecA"/>
    <property type="match status" value="1"/>
</dbReference>
<dbReference type="FunFam" id="3.40.50.300:FF:000087">
    <property type="entry name" value="Recombinase RecA"/>
    <property type="match status" value="1"/>
</dbReference>
<dbReference type="Gene3D" id="3.40.50.300">
    <property type="entry name" value="P-loop containing nucleotide triphosphate hydrolases"/>
    <property type="match status" value="1"/>
</dbReference>
<dbReference type="HAMAP" id="MF_00268">
    <property type="entry name" value="RecA"/>
    <property type="match status" value="1"/>
</dbReference>
<dbReference type="InterPro" id="IPR003593">
    <property type="entry name" value="AAA+_ATPase"/>
</dbReference>
<dbReference type="InterPro" id="IPR013765">
    <property type="entry name" value="DNA_recomb/repair_RecA"/>
</dbReference>
<dbReference type="InterPro" id="IPR020584">
    <property type="entry name" value="DNA_recomb/repair_RecA_CS"/>
</dbReference>
<dbReference type="InterPro" id="IPR027417">
    <property type="entry name" value="P-loop_NTPase"/>
</dbReference>
<dbReference type="InterPro" id="IPR049261">
    <property type="entry name" value="RecA-like_C"/>
</dbReference>
<dbReference type="InterPro" id="IPR049428">
    <property type="entry name" value="RecA-like_N"/>
</dbReference>
<dbReference type="InterPro" id="IPR020588">
    <property type="entry name" value="RecA_ATP-bd"/>
</dbReference>
<dbReference type="InterPro" id="IPR023400">
    <property type="entry name" value="RecA_C_sf"/>
</dbReference>
<dbReference type="InterPro" id="IPR020587">
    <property type="entry name" value="RecA_monomer-monomer_interface"/>
</dbReference>
<dbReference type="NCBIfam" id="TIGR02012">
    <property type="entry name" value="tigrfam_recA"/>
    <property type="match status" value="1"/>
</dbReference>
<dbReference type="PANTHER" id="PTHR45900:SF1">
    <property type="entry name" value="MITOCHONDRIAL DNA REPAIR PROTEIN RECA HOMOLOG-RELATED"/>
    <property type="match status" value="1"/>
</dbReference>
<dbReference type="PANTHER" id="PTHR45900">
    <property type="entry name" value="RECA"/>
    <property type="match status" value="1"/>
</dbReference>
<dbReference type="Pfam" id="PF00154">
    <property type="entry name" value="RecA"/>
    <property type="match status" value="1"/>
</dbReference>
<dbReference type="Pfam" id="PF21096">
    <property type="entry name" value="RecA_C"/>
    <property type="match status" value="1"/>
</dbReference>
<dbReference type="PRINTS" id="PR00142">
    <property type="entry name" value="RECA"/>
</dbReference>
<dbReference type="SMART" id="SM00382">
    <property type="entry name" value="AAA"/>
    <property type="match status" value="1"/>
</dbReference>
<dbReference type="SUPFAM" id="SSF52540">
    <property type="entry name" value="P-loop containing nucleoside triphosphate hydrolases"/>
    <property type="match status" value="1"/>
</dbReference>
<dbReference type="SUPFAM" id="SSF54752">
    <property type="entry name" value="RecA protein, C-terminal domain"/>
    <property type="match status" value="1"/>
</dbReference>
<dbReference type="PROSITE" id="PS00321">
    <property type="entry name" value="RECA_1"/>
    <property type="match status" value="1"/>
</dbReference>
<dbReference type="PROSITE" id="PS50162">
    <property type="entry name" value="RECA_2"/>
    <property type="match status" value="1"/>
</dbReference>
<dbReference type="PROSITE" id="PS50163">
    <property type="entry name" value="RECA_3"/>
    <property type="match status" value="1"/>
</dbReference>
<protein>
    <recommendedName>
        <fullName evidence="1">Protein RecA</fullName>
    </recommendedName>
    <alternativeName>
        <fullName evidence="1">Recombinase A</fullName>
    </alternativeName>
</protein>
<gene>
    <name evidence="1" type="primary">recA</name>
    <name type="ordered locus">MGAS2096_Spy1832</name>
</gene>
<sequence>MAKKLKKNEEITKKFGDERRKALDDALKNIEKDFGKGAVMRLGERAEQKVQVMSSGSLALDIALGAGGYPKGRIIEIYGPESSGKTTVALHAVAQAQKEGGIAAFIDAEHALDPAYAAALGVNIDELLLSQPDSGEQGLEIAGKLIDSGAVDLVVVDSVAALVPRAEIDGDIGDSHVGLQARMMSQAMRKLSASINKTKTIAIFINQLREKVGVMFGNPETTPGGRALKFYASVRLDVRGTTQIKGTGDQKDSSIGKETKIKVVKNKVAPPFKVAEVEIMYGEGISRTGELVKIASDLDIIQKAGAWFSYNGEKIGQGSENAKRYLAEHPELFDEIDRKVRVKFGLLEESEEESAMAVASEETDDLALDLDNGIEIED</sequence>
<organism>
    <name type="scientific">Streptococcus pyogenes serotype M12 (strain MGAS2096)</name>
    <dbReference type="NCBI Taxonomy" id="370553"/>
    <lineage>
        <taxon>Bacteria</taxon>
        <taxon>Bacillati</taxon>
        <taxon>Bacillota</taxon>
        <taxon>Bacilli</taxon>
        <taxon>Lactobacillales</taxon>
        <taxon>Streptococcaceae</taxon>
        <taxon>Streptococcus</taxon>
    </lineage>
</organism>
<feature type="chain" id="PRO_1000048011" description="Protein RecA">
    <location>
        <begin position="1"/>
        <end position="378"/>
    </location>
</feature>
<feature type="binding site" evidence="1">
    <location>
        <begin position="79"/>
        <end position="86"/>
    </location>
    <ligand>
        <name>ATP</name>
        <dbReference type="ChEBI" id="CHEBI:30616"/>
    </ligand>
</feature>
<proteinExistence type="inferred from homology"/>
<evidence type="ECO:0000255" key="1">
    <source>
        <dbReference type="HAMAP-Rule" id="MF_00268"/>
    </source>
</evidence>
<accession>Q1J9C7</accession>